<sequence>MKFQLLTLVSIATTTLAINLEQVRLINDDELMVQDAQFDYPAIVNLKDQDAEIAKKTITSSSSTTTTTTAKKDKKTTSTTSASSTTTTSTKSNSTSPSSSSSKKHKSETASITKTGGADSVAAAAAVGGPILAALALLL</sequence>
<dbReference type="EMBL" id="CP017626">
    <property type="protein sequence ID" value="AOW28918.1"/>
    <property type="molecule type" value="Genomic_DNA"/>
</dbReference>
<dbReference type="RefSeq" id="XP_722722.2">
    <property type="nucleotide sequence ID" value="XM_717629.2"/>
</dbReference>
<dbReference type="STRING" id="237561.Q5AMJ5"/>
<dbReference type="GlyCosmos" id="Q5AMJ5">
    <property type="glycosylation" value="1 site, No reported glycans"/>
</dbReference>
<dbReference type="EnsemblFungi" id="C4_01360W_A-T">
    <property type="protein sequence ID" value="C4_01360W_A-T-p1"/>
    <property type="gene ID" value="C4_01360W_A"/>
</dbReference>
<dbReference type="GeneID" id="3635599"/>
<dbReference type="KEGG" id="cal:CAALFM_C401360WA"/>
<dbReference type="CGD" id="CAL0000200268">
    <property type="gene designation" value="PGA53"/>
</dbReference>
<dbReference type="VEuPathDB" id="FungiDB:C4_01360W_A"/>
<dbReference type="eggNOG" id="ENOG502RQFB">
    <property type="taxonomic scope" value="Eukaryota"/>
</dbReference>
<dbReference type="HOGENOM" id="CLU_1844796_0_0_1"/>
<dbReference type="InParanoid" id="Q5AMJ5"/>
<dbReference type="OrthoDB" id="4026137at2759"/>
<dbReference type="PRO" id="PR:Q5AMJ5"/>
<dbReference type="Proteomes" id="UP000000559">
    <property type="component" value="Chromosome 4"/>
</dbReference>
<dbReference type="GO" id="GO:0005886">
    <property type="term" value="C:plasma membrane"/>
    <property type="evidence" value="ECO:0000314"/>
    <property type="project" value="CGD"/>
</dbReference>
<dbReference type="GO" id="GO:0098552">
    <property type="term" value="C:side of membrane"/>
    <property type="evidence" value="ECO:0007669"/>
    <property type="project" value="UniProtKB-KW"/>
</dbReference>
<feature type="signal peptide" evidence="1">
    <location>
        <begin position="1"/>
        <end position="17"/>
    </location>
</feature>
<feature type="chain" id="PRO_0000429954" description="GPI-anchored protein 53">
    <location>
        <begin position="18"/>
        <end position="116"/>
    </location>
</feature>
<feature type="propeptide" id="PRO_0000429955" description="Removed in mature form" evidence="1">
    <location>
        <begin position="117"/>
        <end position="139"/>
    </location>
</feature>
<feature type="region of interest" description="Disordered" evidence="2">
    <location>
        <begin position="57"/>
        <end position="115"/>
    </location>
</feature>
<feature type="compositionally biased region" description="Low complexity" evidence="2">
    <location>
        <begin position="57"/>
        <end position="69"/>
    </location>
</feature>
<feature type="compositionally biased region" description="Low complexity" evidence="2">
    <location>
        <begin position="77"/>
        <end position="101"/>
    </location>
</feature>
<feature type="lipid moiety-binding region" description="GPI-anchor amidated glycine" evidence="1">
    <location>
        <position position="116"/>
    </location>
</feature>
<feature type="glycosylation site" description="N-linked (GlcNAc...) asparagine" evidence="1">
    <location>
        <position position="93"/>
    </location>
</feature>
<organism>
    <name type="scientific">Candida albicans (strain SC5314 / ATCC MYA-2876)</name>
    <name type="common">Yeast</name>
    <dbReference type="NCBI Taxonomy" id="237561"/>
    <lineage>
        <taxon>Eukaryota</taxon>
        <taxon>Fungi</taxon>
        <taxon>Dikarya</taxon>
        <taxon>Ascomycota</taxon>
        <taxon>Saccharomycotina</taxon>
        <taxon>Pichiomycetes</taxon>
        <taxon>Debaryomycetaceae</taxon>
        <taxon>Candida/Lodderomyces clade</taxon>
        <taxon>Candida</taxon>
    </lineage>
</organism>
<evidence type="ECO:0000255" key="1"/>
<evidence type="ECO:0000256" key="2">
    <source>
        <dbReference type="SAM" id="MobiDB-lite"/>
    </source>
</evidence>
<evidence type="ECO:0000269" key="3">
    <source>
    </source>
</evidence>
<reference key="1">
    <citation type="journal article" date="2004" name="Proc. Natl. Acad. Sci. U.S.A.">
        <title>The diploid genome sequence of Candida albicans.</title>
        <authorList>
            <person name="Jones T."/>
            <person name="Federspiel N.A."/>
            <person name="Chibana H."/>
            <person name="Dungan J."/>
            <person name="Kalman S."/>
            <person name="Magee B.B."/>
            <person name="Newport G."/>
            <person name="Thorstenson Y.R."/>
            <person name="Agabian N."/>
            <person name="Magee P.T."/>
            <person name="Davis R.W."/>
            <person name="Scherer S."/>
        </authorList>
    </citation>
    <scope>NUCLEOTIDE SEQUENCE [LARGE SCALE GENOMIC DNA]</scope>
    <source>
        <strain>SC5314 / ATCC MYA-2876</strain>
    </source>
</reference>
<reference key="2">
    <citation type="journal article" date="2007" name="Genome Biol.">
        <title>Assembly of the Candida albicans genome into sixteen supercontigs aligned on the eight chromosomes.</title>
        <authorList>
            <person name="van het Hoog M."/>
            <person name="Rast T.J."/>
            <person name="Martchenko M."/>
            <person name="Grindle S."/>
            <person name="Dignard D."/>
            <person name="Hogues H."/>
            <person name="Cuomo C."/>
            <person name="Berriman M."/>
            <person name="Scherer S."/>
            <person name="Magee B.B."/>
            <person name="Whiteway M."/>
            <person name="Chibana H."/>
            <person name="Nantel A."/>
            <person name="Magee P.T."/>
        </authorList>
    </citation>
    <scope>GENOME REANNOTATION</scope>
    <source>
        <strain>SC5314 / ATCC MYA-2876</strain>
    </source>
</reference>
<reference key="3">
    <citation type="journal article" date="2013" name="Genome Biol.">
        <title>Assembly of a phased diploid Candida albicans genome facilitates allele-specific measurements and provides a simple model for repeat and indel structure.</title>
        <authorList>
            <person name="Muzzey D."/>
            <person name="Schwartz K."/>
            <person name="Weissman J.S."/>
            <person name="Sherlock G."/>
        </authorList>
    </citation>
    <scope>NUCLEOTIDE SEQUENCE [LARGE SCALE GENOMIC DNA]</scope>
    <scope>GENOME REANNOTATION</scope>
    <source>
        <strain>SC5314 / ATCC MYA-2876</strain>
    </source>
</reference>
<reference key="4">
    <citation type="journal article" date="2003" name="Yeast">
        <title>Genome-wide identification of fungal GPI proteins.</title>
        <authorList>
            <person name="De Groot P.W."/>
            <person name="Hellingwerf K.J."/>
            <person name="Klis F.M."/>
        </authorList>
    </citation>
    <scope>PREDICTION OF GPI-ANCHOR</scope>
</reference>
<reference key="5">
    <citation type="journal article" date="2009" name="Proteomics">
        <title>Analysis of Candida albicans plasma membrane proteome.</title>
        <authorList>
            <person name="Cabezon V."/>
            <person name="Llama-Palacios A."/>
            <person name="Nombela C."/>
            <person name="Monteoliva L."/>
            <person name="Gil C."/>
        </authorList>
    </citation>
    <scope>IDENTIFICATION BY MASS SPECTROMETRY</scope>
    <scope>SUBCELLULAR LOCATION</scope>
</reference>
<gene>
    <name type="primary">PGA53</name>
    <name type="ordered locus">CAALFM_C401360WA</name>
    <name type="ORF">CaO19.12120</name>
    <name type="ORF">CaO19.4651</name>
</gene>
<proteinExistence type="evidence at protein level"/>
<accession>Q5AMJ5</accession>
<accession>A0A1D8PLE1</accession>
<accession>Q5AN01</accession>
<name>PGA53_CANAL</name>
<protein>
    <recommendedName>
        <fullName>GPI-anchored protein 53</fullName>
    </recommendedName>
</protein>
<comment type="subcellular location">
    <subcellularLocation>
        <location evidence="3">Cell membrane</location>
        <topology evidence="3">Lipid-anchor</topology>
        <topology evidence="3">GPI-anchor</topology>
    </subcellularLocation>
</comment>
<keyword id="KW-1003">Cell membrane</keyword>
<keyword id="KW-0325">Glycoprotein</keyword>
<keyword id="KW-0336">GPI-anchor</keyword>
<keyword id="KW-0449">Lipoprotein</keyword>
<keyword id="KW-0472">Membrane</keyword>
<keyword id="KW-1185">Reference proteome</keyword>
<keyword id="KW-0732">Signal</keyword>